<name>TCSR1_PARSO</name>
<reference key="1">
    <citation type="submission" date="2013-10" db="EMBL/GenBank/DDBJ databases">
        <title>Clostridium sordellii variant toxins TcsL9048 and TcsH9048, gene characterization and comparative analysis of substrate specificity of the large clostridial glucosylating toxins.</title>
        <authorList>
            <person name="Popoff M.-R."/>
            <person name="Pauillac S."/>
            <person name="Bouvet P."/>
            <person name="Just I."/>
            <person name="Genth H."/>
            <person name="Bouchier C."/>
        </authorList>
    </citation>
    <scope>NUCLEOTIDE SEQUENCE [GENOMIC DNA]</scope>
    <source>
        <strain>6018 / IP82</strain>
    </source>
</reference>
<sequence>MSNLYESIRKYKCGYIEEILNILDMFDPLLNKFQRNSCYEDMKSELSLFMFNLIDNFPLEKDCFKEDKFIINYIYKSLKNKFIQVNKLHQKVKSYETNIDIIWVNNCDYANLLSTVIFEDIIKDLTQNEKNILRKIYLHGLRESEISRELNISRQAVNKTHLRALEKLKKLIN</sequence>
<keyword id="KW-0238">DNA-binding</keyword>
<keyword id="KW-0731">Sigma factor</keyword>
<keyword id="KW-0804">Transcription</keyword>
<keyword id="KW-0805">Transcription regulation</keyword>
<organism>
    <name type="scientific">Paraclostridium sordellii</name>
    <name type="common">Clostridium sordellii</name>
    <dbReference type="NCBI Taxonomy" id="1505"/>
    <lineage>
        <taxon>Bacteria</taxon>
        <taxon>Bacillati</taxon>
        <taxon>Bacillota</taxon>
        <taxon>Clostridia</taxon>
        <taxon>Peptostreptococcales</taxon>
        <taxon>Peptostreptococcaceae</taxon>
        <taxon>Paraclostridium</taxon>
    </lineage>
</organism>
<dbReference type="EMBL" id="KF726117">
    <property type="protein sequence ID" value="AHB59893.1"/>
    <property type="molecule type" value="Genomic_DNA"/>
</dbReference>
<dbReference type="SMR" id="V5T8H7"/>
<dbReference type="GO" id="GO:0003677">
    <property type="term" value="F:DNA binding"/>
    <property type="evidence" value="ECO:0007669"/>
    <property type="project" value="UniProtKB-KW"/>
</dbReference>
<dbReference type="GO" id="GO:0016987">
    <property type="term" value="F:sigma factor activity"/>
    <property type="evidence" value="ECO:0007669"/>
    <property type="project" value="UniProtKB-KW"/>
</dbReference>
<dbReference type="GO" id="GO:0006352">
    <property type="term" value="P:DNA-templated transcription initiation"/>
    <property type="evidence" value="ECO:0007669"/>
    <property type="project" value="InterPro"/>
</dbReference>
<dbReference type="CDD" id="cd06171">
    <property type="entry name" value="Sigma70_r4"/>
    <property type="match status" value="1"/>
</dbReference>
<dbReference type="Gene3D" id="1.20.140.160">
    <property type="match status" value="1"/>
</dbReference>
<dbReference type="InterPro" id="IPR014284">
    <property type="entry name" value="RNA_pol_sigma-70_dom"/>
</dbReference>
<dbReference type="InterPro" id="IPR007630">
    <property type="entry name" value="RNA_pol_sigma70_r4"/>
</dbReference>
<dbReference type="InterPro" id="IPR013324">
    <property type="entry name" value="RNA_pol_sigma_r3/r4-like"/>
</dbReference>
<dbReference type="NCBIfam" id="TIGR02937">
    <property type="entry name" value="sigma70-ECF"/>
    <property type="match status" value="1"/>
</dbReference>
<dbReference type="Pfam" id="PF04545">
    <property type="entry name" value="Sigma70_r4"/>
    <property type="match status" value="1"/>
</dbReference>
<dbReference type="SUPFAM" id="SSF88659">
    <property type="entry name" value="Sigma3 and sigma4 domains of RNA polymerase sigma factors"/>
    <property type="match status" value="1"/>
</dbReference>
<accession>V5T8H7</accession>
<gene>
    <name evidence="1" type="primary">tcsR</name>
</gene>
<evidence type="ECO:0000250" key="1">
    <source>
        <dbReference type="UniProtKB" id="T0CUB8"/>
    </source>
</evidence>
<evidence type="ECO:0000255" key="2"/>
<evidence type="ECO:0000305" key="3"/>
<protein>
    <recommendedName>
        <fullName evidence="3">RNA polymerase sigma factor TcsR</fullName>
    </recommendedName>
</protein>
<feature type="chain" id="PRO_0000451203" description="RNA polymerase sigma factor TcsR">
    <location>
        <begin position="1"/>
        <end position="173"/>
    </location>
</feature>
<feature type="DNA-binding region" description="H-T-H motif" evidence="3">
    <location>
        <begin position="143"/>
        <end position="162"/>
    </location>
</feature>
<feature type="region of interest" description="Sigma-70 factor domain-4" evidence="2">
    <location>
        <begin position="122"/>
        <end position="169"/>
    </location>
</feature>
<proteinExistence type="inferred from homology"/>
<comment type="function">
    <text evidence="1 3">Sigma factors are initiation factors that promote the attachment of RNA polymerase to specific initiation sites and are then released (Probable). Transcriptional regulator specifically required to activate expression of the toxin gene locus, composed of tcsL and tcdE/utxA (By similarity).</text>
</comment>
<comment type="similarity">
    <text evidence="3">Belongs to the sigma-70 factor family.</text>
</comment>